<feature type="chain" id="PRO_0000198430" description="Ribonuclease P protein component">
    <location>
        <begin position="1"/>
        <end position="111"/>
    </location>
</feature>
<sequence>MKKRNISLKSKIEIQKIFKEGNLIRFSNLNLKMFFKSNNLIYSRLLVTFSKGFRGSVKRNRVRRLFKEAFRKRLELLEGRAVDIIFVVSYNRLNLTYFRIESLIKNLVLMV</sequence>
<organism>
    <name type="scientific">Borrelia garinii subsp. bavariensis (strain ATCC BAA-2496 / DSM 23469 / PBi)</name>
    <name type="common">Borreliella bavariensis</name>
    <dbReference type="NCBI Taxonomy" id="290434"/>
    <lineage>
        <taxon>Bacteria</taxon>
        <taxon>Pseudomonadati</taxon>
        <taxon>Spirochaetota</taxon>
        <taxon>Spirochaetia</taxon>
        <taxon>Spirochaetales</taxon>
        <taxon>Borreliaceae</taxon>
        <taxon>Borreliella</taxon>
    </lineage>
</organism>
<evidence type="ECO:0000255" key="1">
    <source>
        <dbReference type="HAMAP-Rule" id="MF_00227"/>
    </source>
</evidence>
<proteinExistence type="inferred from homology"/>
<name>RNPA_BORGP</name>
<keyword id="KW-0255">Endonuclease</keyword>
<keyword id="KW-0378">Hydrolase</keyword>
<keyword id="KW-0540">Nuclease</keyword>
<keyword id="KW-0694">RNA-binding</keyword>
<keyword id="KW-0819">tRNA processing</keyword>
<protein>
    <recommendedName>
        <fullName evidence="1">Ribonuclease P protein component</fullName>
        <shortName evidence="1">RNase P protein</shortName>
        <shortName evidence="1">RNaseP protein</shortName>
        <ecNumber evidence="1">3.1.26.5</ecNumber>
    </recommendedName>
    <alternativeName>
        <fullName evidence="1">Protein C5</fullName>
    </alternativeName>
</protein>
<gene>
    <name evidence="1" type="primary">rnpA</name>
    <name type="ordered locus">BG0448</name>
</gene>
<accession>Q661I0</accession>
<dbReference type="EC" id="3.1.26.5" evidence="1"/>
<dbReference type="EMBL" id="CP000013">
    <property type="protein sequence ID" value="AAU07291.1"/>
    <property type="molecule type" value="Genomic_DNA"/>
</dbReference>
<dbReference type="RefSeq" id="WP_011193761.1">
    <property type="nucleotide sequence ID" value="NZ_CP028872.1"/>
</dbReference>
<dbReference type="SMR" id="Q661I0"/>
<dbReference type="GeneID" id="45161233"/>
<dbReference type="KEGG" id="bga:BG0448"/>
<dbReference type="eggNOG" id="COG0594">
    <property type="taxonomic scope" value="Bacteria"/>
</dbReference>
<dbReference type="HOGENOM" id="CLU_2116283_0_0_12"/>
<dbReference type="OrthoDB" id="350607at2"/>
<dbReference type="Proteomes" id="UP000002276">
    <property type="component" value="Chromosome"/>
</dbReference>
<dbReference type="GO" id="GO:0004526">
    <property type="term" value="F:ribonuclease P activity"/>
    <property type="evidence" value="ECO:0007669"/>
    <property type="project" value="UniProtKB-UniRule"/>
</dbReference>
<dbReference type="GO" id="GO:0000049">
    <property type="term" value="F:tRNA binding"/>
    <property type="evidence" value="ECO:0007669"/>
    <property type="project" value="UniProtKB-UniRule"/>
</dbReference>
<dbReference type="GO" id="GO:0001682">
    <property type="term" value="P:tRNA 5'-leader removal"/>
    <property type="evidence" value="ECO:0007669"/>
    <property type="project" value="UniProtKB-UniRule"/>
</dbReference>
<dbReference type="Gene3D" id="3.30.230.10">
    <property type="match status" value="1"/>
</dbReference>
<dbReference type="HAMAP" id="MF_00227">
    <property type="entry name" value="RNase_P"/>
    <property type="match status" value="1"/>
</dbReference>
<dbReference type="InterPro" id="IPR020568">
    <property type="entry name" value="Ribosomal_Su5_D2-typ_SF"/>
</dbReference>
<dbReference type="InterPro" id="IPR014721">
    <property type="entry name" value="Ribsml_uS5_D2-typ_fold_subgr"/>
</dbReference>
<dbReference type="InterPro" id="IPR000100">
    <property type="entry name" value="RNase_P"/>
</dbReference>
<dbReference type="NCBIfam" id="TIGR00188">
    <property type="entry name" value="rnpA"/>
    <property type="match status" value="1"/>
</dbReference>
<dbReference type="Pfam" id="PF00825">
    <property type="entry name" value="Ribonuclease_P"/>
    <property type="match status" value="1"/>
</dbReference>
<dbReference type="SUPFAM" id="SSF54211">
    <property type="entry name" value="Ribosomal protein S5 domain 2-like"/>
    <property type="match status" value="1"/>
</dbReference>
<comment type="function">
    <text evidence="1">RNaseP catalyzes the removal of the 5'-leader sequence from pre-tRNA to produce the mature 5'-terminus. It can also cleave other RNA substrates such as 4.5S RNA. The protein component plays an auxiliary but essential role in vivo by binding to the 5'-leader sequence and broadening the substrate specificity of the ribozyme.</text>
</comment>
<comment type="catalytic activity">
    <reaction evidence="1">
        <text>Endonucleolytic cleavage of RNA, removing 5'-extranucleotides from tRNA precursor.</text>
        <dbReference type="EC" id="3.1.26.5"/>
    </reaction>
</comment>
<comment type="subunit">
    <text evidence="1">Consists of a catalytic RNA component (M1 or rnpB) and a protein subunit.</text>
</comment>
<comment type="similarity">
    <text evidence="1">Belongs to the RnpA family.</text>
</comment>
<reference key="1">
    <citation type="journal article" date="2004" name="Nucleic Acids Res.">
        <title>Comparative analysis of the Borrelia garinii genome.</title>
        <authorList>
            <person name="Gloeckner G."/>
            <person name="Lehmann R."/>
            <person name="Romualdi A."/>
            <person name="Pradella S."/>
            <person name="Schulte-Spechtel U."/>
            <person name="Schilhabel M."/>
            <person name="Wilske B."/>
            <person name="Suehnel J."/>
            <person name="Platzer M."/>
        </authorList>
    </citation>
    <scope>NUCLEOTIDE SEQUENCE [LARGE SCALE GENOMIC DNA]</scope>
    <source>
        <strain>ATCC BAA-2496 / DSM 23469 / PBi</strain>
    </source>
</reference>